<accession>Q9XPT0</accession>
<feature type="chain" id="PRO_0000002601" description="ATP synthase subunit a, chloroplastic">
    <location>
        <begin position="1"/>
        <end position="247"/>
    </location>
</feature>
<feature type="transmembrane region" description="Helical" evidence="1">
    <location>
        <begin position="38"/>
        <end position="58"/>
    </location>
</feature>
<feature type="transmembrane region" description="Helical" evidence="1">
    <location>
        <begin position="95"/>
        <end position="115"/>
    </location>
</feature>
<feature type="transmembrane region" description="Helical" evidence="1">
    <location>
        <begin position="134"/>
        <end position="154"/>
    </location>
</feature>
<feature type="transmembrane region" description="Helical" evidence="1">
    <location>
        <begin position="199"/>
        <end position="219"/>
    </location>
</feature>
<feature type="transmembrane region" description="Helical" evidence="1">
    <location>
        <begin position="220"/>
        <end position="240"/>
    </location>
</feature>
<gene>
    <name evidence="1" type="primary">atpI</name>
</gene>
<evidence type="ECO:0000255" key="1">
    <source>
        <dbReference type="HAMAP-Rule" id="MF_01393"/>
    </source>
</evidence>
<organism>
    <name type="scientific">Triticum aestivum</name>
    <name type="common">Wheat</name>
    <dbReference type="NCBI Taxonomy" id="4565"/>
    <lineage>
        <taxon>Eukaryota</taxon>
        <taxon>Viridiplantae</taxon>
        <taxon>Streptophyta</taxon>
        <taxon>Embryophyta</taxon>
        <taxon>Tracheophyta</taxon>
        <taxon>Spermatophyta</taxon>
        <taxon>Magnoliopsida</taxon>
        <taxon>Liliopsida</taxon>
        <taxon>Poales</taxon>
        <taxon>Poaceae</taxon>
        <taxon>BOP clade</taxon>
        <taxon>Pooideae</taxon>
        <taxon>Triticodae</taxon>
        <taxon>Triticeae</taxon>
        <taxon>Triticinae</taxon>
        <taxon>Triticum</taxon>
    </lineage>
</organism>
<comment type="function">
    <text evidence="1">Key component of the proton channel; it plays a direct role in the translocation of protons across the membrane.</text>
</comment>
<comment type="subunit">
    <text evidence="1">F-type ATPases have 2 components, CF(1) - the catalytic core - and CF(0) - the membrane proton channel. CF(1) has five subunits: alpha(3), beta(3), gamma(1), delta(1), epsilon(1). CF(0) has four main subunits: a, b, b' and c.</text>
</comment>
<comment type="subcellular location">
    <subcellularLocation>
        <location evidence="1">Plastid</location>
        <location evidence="1">Chloroplast thylakoid membrane</location>
        <topology evidence="1">Multi-pass membrane protein</topology>
    </subcellularLocation>
</comment>
<comment type="similarity">
    <text evidence="1">Belongs to the ATPase A chain family.</text>
</comment>
<proteinExistence type="inferred from homology"/>
<sequence>MNIIPCSIKTLKGLYDISGVEVGQHFYWQIGGFQIHAQVLITSWVVITILLGSVVIAVRNPQTIPTDGQNFFEYVLEFIRDLSKTQIGEEYGPWVPFIGTMFLFIFVSNWSGALLPWKIIELPHGELAAPTNDINTTVALALLTSAAYFYAGLSKKGLSYFEKYIKPTPILLPINILEDFTKPLSLSFRLFGNILADELVVVVLVSLVPLVIPIPVMFLGLFTSGIQALIFATLAAAYIGESMEGHH</sequence>
<name>ATPI_WHEAT</name>
<dbReference type="EMBL" id="AB027572">
    <property type="protein sequence ID" value="BAA78044.1"/>
    <property type="molecule type" value="Genomic_DNA"/>
</dbReference>
<dbReference type="EMBL" id="AB042240">
    <property type="protein sequence ID" value="BAB47028.1"/>
    <property type="molecule type" value="Genomic_DNA"/>
</dbReference>
<dbReference type="PIR" id="S14127">
    <property type="entry name" value="S14127"/>
</dbReference>
<dbReference type="RefSeq" id="NP_114253.1">
    <property type="nucleotide sequence ID" value="NC_002762.1"/>
</dbReference>
<dbReference type="SMR" id="Q9XPT0"/>
<dbReference type="STRING" id="4565.Q9XPT0"/>
<dbReference type="PaxDb" id="4565-EPlTAEP00000010013"/>
<dbReference type="EnsemblPlants" id="TraesCSU02G263400.1">
    <property type="protein sequence ID" value="TraesCSU02G263400.1.cds1"/>
    <property type="gene ID" value="TraesCSU02G263400"/>
</dbReference>
<dbReference type="EnsemblPlants" id="TraesCSU03G0519000.1">
    <property type="protein sequence ID" value="TraesCSU03G0519000.1.CDS1"/>
    <property type="gene ID" value="TraesCSU03G0519000"/>
</dbReference>
<dbReference type="EnsemblPlants" id="TraesKARUn01G0079970.1">
    <property type="protein sequence ID" value="cds.TraesKARUn01G0079970.1"/>
    <property type="gene ID" value="TraesKARUn01G0079970"/>
</dbReference>
<dbReference type="EnsemblPlants" id="TraesKARUn01G0084690.1">
    <property type="protein sequence ID" value="cds.TraesKARUn01G0084690.1"/>
    <property type="gene ID" value="TraesKARUn01G0084690"/>
</dbReference>
<dbReference type="EnsemblPlants" id="TraesKARUn01G0087290.1">
    <property type="protein sequence ID" value="cds.TraesKARUn01G0087290.1"/>
    <property type="gene ID" value="TraesKARUn01G0087290"/>
</dbReference>
<dbReference type="EnsemblPlants" id="TraesKARUn01G0101200.1">
    <property type="protein sequence ID" value="cds.TraesKARUn01G0101200.1"/>
    <property type="gene ID" value="TraesKARUn01G0101200"/>
</dbReference>
<dbReference type="EnsemblPlants" id="TraesKARUn01G0101300.1">
    <property type="protein sequence ID" value="cds.TraesKARUn01G0101300.1"/>
    <property type="gene ID" value="TraesKARUn01G0101300"/>
</dbReference>
<dbReference type="EnsemblPlants" id="TraesKARUn01G0101600.1">
    <property type="protein sequence ID" value="cds.TraesKARUn01G0101600.1"/>
    <property type="gene ID" value="TraesKARUn01G0101600"/>
</dbReference>
<dbReference type="EnsemblPlants" id="TraesKARUn01G0102330.1">
    <property type="protein sequence ID" value="cds.TraesKARUn01G0102330.1"/>
    <property type="gene ID" value="TraesKARUn01G0102330"/>
</dbReference>
<dbReference type="EnsemblPlants" id="TraesKARUn01G0107120.1">
    <property type="protein sequence ID" value="cds.TraesKARUn01G0107120.1"/>
    <property type="gene ID" value="TraesKARUn01G0107120"/>
</dbReference>
<dbReference type="EnsemblPlants" id="TraesKARUn01G0107240.1">
    <property type="protein sequence ID" value="cds.TraesKARUn01G0107240.1"/>
    <property type="gene ID" value="TraesKARUn01G0107240"/>
</dbReference>
<dbReference type="EnsemblPlants" id="TraesKARUn01G0155330.1">
    <property type="protein sequence ID" value="cds.TraesKARUn01G0155330.1"/>
    <property type="gene ID" value="TraesKARUn01G0155330"/>
</dbReference>
<dbReference type="EnsemblPlants" id="TraesKARUn01G0167330.1">
    <property type="protein sequence ID" value="cds.TraesKARUn01G0167330.1"/>
    <property type="gene ID" value="TraesKARUn01G0167330"/>
</dbReference>
<dbReference type="EnsemblPlants" id="TraesLDM2A03G00804120.1">
    <property type="protein sequence ID" value="TraesLDM2A03G00804120.1.CDS1"/>
    <property type="gene ID" value="TraesLDM2A03G00804120"/>
</dbReference>
<dbReference type="EnsemblPlants" id="TraesPARA_EIv1.0_0757340.1">
    <property type="protein sequence ID" value="TraesPARA_EIv1.0_0757340.1.CDS1"/>
    <property type="gene ID" value="TraesPARA_EIv1.0_0757340"/>
</dbReference>
<dbReference type="EnsemblPlants" id="TraesPARA_EIv1.0_2233260.1">
    <property type="protein sequence ID" value="TraesPARA_EIv1.0_2233260.1.CDS1"/>
    <property type="gene ID" value="TraesPARA_EIv1.0_2233260"/>
</dbReference>
<dbReference type="EnsemblPlants" id="TraesPARA_EIv1.0_2652890.1">
    <property type="protein sequence ID" value="TraesPARA_EIv1.0_2652890.1.CDS1"/>
    <property type="gene ID" value="TraesPARA_EIv1.0_2652890"/>
</dbReference>
<dbReference type="EnsemblPlants" id="TraesPARA_EIv1.0_2655130.1">
    <property type="protein sequence ID" value="TraesPARA_EIv1.0_2655130.1.CDS1"/>
    <property type="gene ID" value="TraesPARA_EIv1.0_2655130"/>
</dbReference>
<dbReference type="EnsemblPlants" id="TraesPARA_EIv1.0_2666870.1">
    <property type="protein sequence ID" value="TraesPARA_EIv1.0_2666870.1.CDS1"/>
    <property type="gene ID" value="TraesPARA_EIv1.0_2666870"/>
</dbReference>
<dbReference type="EnsemblPlants" id="TraesPARA_EIv1.0_2668610.1">
    <property type="protein sequence ID" value="TraesPARA_EIv1.0_2668610.1.CDS1"/>
    <property type="gene ID" value="TraesPARA_EIv1.0_2668610"/>
</dbReference>
<dbReference type="EnsemblPlants" id="TraesPARA_EIv1.0_2671950.1">
    <property type="protein sequence ID" value="TraesPARA_EIv1.0_2671950.1.CDS1"/>
    <property type="gene ID" value="TraesPARA_EIv1.0_2671950"/>
</dbReference>
<dbReference type="EnsemblPlants" id="TraesPARA_EIv1.0_2672200.1">
    <property type="protein sequence ID" value="TraesPARA_EIv1.0_2672200.1.CDS1"/>
    <property type="gene ID" value="TraesPARA_EIv1.0_2672200"/>
</dbReference>
<dbReference type="GeneID" id="803092"/>
<dbReference type="Gramene" id="TraesCSU02G263400.1">
    <property type="protein sequence ID" value="TraesCSU02G263400.1.cds1"/>
    <property type="gene ID" value="TraesCSU02G263400"/>
</dbReference>
<dbReference type="Gramene" id="TraesCSU03G0519000.1">
    <property type="protein sequence ID" value="TraesCSU03G0519000.1.CDS1"/>
    <property type="gene ID" value="TraesCSU03G0519000"/>
</dbReference>
<dbReference type="Gramene" id="TraesKARUn01G0079970.1">
    <property type="protein sequence ID" value="cds.TraesKARUn01G0079970.1"/>
    <property type="gene ID" value="TraesKARUn01G0079970"/>
</dbReference>
<dbReference type="Gramene" id="TraesKARUn01G0084690.1">
    <property type="protein sequence ID" value="cds.TraesKARUn01G0084690.1"/>
    <property type="gene ID" value="TraesKARUn01G0084690"/>
</dbReference>
<dbReference type="Gramene" id="TraesKARUn01G0087290.1">
    <property type="protein sequence ID" value="cds.TraesKARUn01G0087290.1"/>
    <property type="gene ID" value="TraesKARUn01G0087290"/>
</dbReference>
<dbReference type="Gramene" id="TraesKARUn01G0101200.1">
    <property type="protein sequence ID" value="cds.TraesKARUn01G0101200.1"/>
    <property type="gene ID" value="TraesKARUn01G0101200"/>
</dbReference>
<dbReference type="Gramene" id="TraesKARUn01G0101300.1">
    <property type="protein sequence ID" value="cds.TraesKARUn01G0101300.1"/>
    <property type="gene ID" value="TraesKARUn01G0101300"/>
</dbReference>
<dbReference type="Gramene" id="TraesKARUn01G0101600.1">
    <property type="protein sequence ID" value="cds.TraesKARUn01G0101600.1"/>
    <property type="gene ID" value="TraesKARUn01G0101600"/>
</dbReference>
<dbReference type="Gramene" id="TraesKARUn01G0102330.1">
    <property type="protein sequence ID" value="cds.TraesKARUn01G0102330.1"/>
    <property type="gene ID" value="TraesKARUn01G0102330"/>
</dbReference>
<dbReference type="Gramene" id="TraesKARUn01G0107120.1">
    <property type="protein sequence ID" value="cds.TraesKARUn01G0107120.1"/>
    <property type="gene ID" value="TraesKARUn01G0107120"/>
</dbReference>
<dbReference type="Gramene" id="TraesKARUn01G0107240.1">
    <property type="protein sequence ID" value="cds.TraesKARUn01G0107240.1"/>
    <property type="gene ID" value="TraesKARUn01G0107240"/>
</dbReference>
<dbReference type="Gramene" id="TraesKARUn01G0155330.1">
    <property type="protein sequence ID" value="cds.TraesKARUn01G0155330.1"/>
    <property type="gene ID" value="TraesKARUn01G0155330"/>
</dbReference>
<dbReference type="Gramene" id="TraesKARUn01G0167330.1">
    <property type="protein sequence ID" value="cds.TraesKARUn01G0167330.1"/>
    <property type="gene ID" value="TraesKARUn01G0167330"/>
</dbReference>
<dbReference type="Gramene" id="TraesLDM2A03G00804120.1">
    <property type="protein sequence ID" value="TraesLDM2A03G00804120.1.CDS1"/>
    <property type="gene ID" value="TraesLDM2A03G00804120"/>
</dbReference>
<dbReference type="Gramene" id="TraesPARA_EIv1.0_0757340.1">
    <property type="protein sequence ID" value="TraesPARA_EIv1.0_0757340.1.CDS1"/>
    <property type="gene ID" value="TraesPARA_EIv1.0_0757340"/>
</dbReference>
<dbReference type="Gramene" id="TraesPARA_EIv1.0_2233260.1">
    <property type="protein sequence ID" value="TraesPARA_EIv1.0_2233260.1.CDS1"/>
    <property type="gene ID" value="TraesPARA_EIv1.0_2233260"/>
</dbReference>
<dbReference type="Gramene" id="TraesPARA_EIv1.0_2652890.1">
    <property type="protein sequence ID" value="TraesPARA_EIv1.0_2652890.1.CDS1"/>
    <property type="gene ID" value="TraesPARA_EIv1.0_2652890"/>
</dbReference>
<dbReference type="Gramene" id="TraesPARA_EIv1.0_2655130.1">
    <property type="protein sequence ID" value="TraesPARA_EIv1.0_2655130.1.CDS1"/>
    <property type="gene ID" value="TraesPARA_EIv1.0_2655130"/>
</dbReference>
<dbReference type="Gramene" id="TraesPARA_EIv1.0_2666870.1">
    <property type="protein sequence ID" value="TraesPARA_EIv1.0_2666870.1.CDS1"/>
    <property type="gene ID" value="TraesPARA_EIv1.0_2666870"/>
</dbReference>
<dbReference type="Gramene" id="TraesPARA_EIv1.0_2668610.1">
    <property type="protein sequence ID" value="TraesPARA_EIv1.0_2668610.1.CDS1"/>
    <property type="gene ID" value="TraesPARA_EIv1.0_2668610"/>
</dbReference>
<dbReference type="Gramene" id="TraesPARA_EIv1.0_2671950.1">
    <property type="protein sequence ID" value="TraesPARA_EIv1.0_2671950.1.CDS1"/>
    <property type="gene ID" value="TraesPARA_EIv1.0_2671950"/>
</dbReference>
<dbReference type="Gramene" id="TraesPARA_EIv1.0_2672200.1">
    <property type="protein sequence ID" value="TraesPARA_EIv1.0_2672200.1.CDS1"/>
    <property type="gene ID" value="TraesPARA_EIv1.0_2672200"/>
</dbReference>
<dbReference type="KEGG" id="taes:803092"/>
<dbReference type="eggNOG" id="KOG4665">
    <property type="taxonomic scope" value="Eukaryota"/>
</dbReference>
<dbReference type="OMA" id="GFFWAAF"/>
<dbReference type="OrthoDB" id="734380at2759"/>
<dbReference type="Proteomes" id="UP000019116">
    <property type="component" value="Chloroplast"/>
</dbReference>
<dbReference type="GO" id="GO:0009535">
    <property type="term" value="C:chloroplast thylakoid membrane"/>
    <property type="evidence" value="ECO:0007669"/>
    <property type="project" value="UniProtKB-SubCell"/>
</dbReference>
<dbReference type="GO" id="GO:0005886">
    <property type="term" value="C:plasma membrane"/>
    <property type="evidence" value="ECO:0007669"/>
    <property type="project" value="UniProtKB-UniRule"/>
</dbReference>
<dbReference type="GO" id="GO:0045259">
    <property type="term" value="C:proton-transporting ATP synthase complex"/>
    <property type="evidence" value="ECO:0007669"/>
    <property type="project" value="UniProtKB-KW"/>
</dbReference>
<dbReference type="GO" id="GO:0046933">
    <property type="term" value="F:proton-transporting ATP synthase activity, rotational mechanism"/>
    <property type="evidence" value="ECO:0007669"/>
    <property type="project" value="UniProtKB-UniRule"/>
</dbReference>
<dbReference type="CDD" id="cd00310">
    <property type="entry name" value="ATP-synt_Fo_a_6"/>
    <property type="match status" value="1"/>
</dbReference>
<dbReference type="FunFam" id="1.20.120.220:FF:000001">
    <property type="entry name" value="ATP synthase subunit a, chloroplastic"/>
    <property type="match status" value="1"/>
</dbReference>
<dbReference type="Gene3D" id="1.20.120.220">
    <property type="entry name" value="ATP synthase, F0 complex, subunit A"/>
    <property type="match status" value="1"/>
</dbReference>
<dbReference type="HAMAP" id="MF_01393">
    <property type="entry name" value="ATP_synth_a_bact"/>
    <property type="match status" value="1"/>
</dbReference>
<dbReference type="InterPro" id="IPR045082">
    <property type="entry name" value="ATP_syn_F0_a_bact/chloroplast"/>
</dbReference>
<dbReference type="InterPro" id="IPR000568">
    <property type="entry name" value="ATP_synth_F0_asu"/>
</dbReference>
<dbReference type="InterPro" id="IPR023011">
    <property type="entry name" value="ATP_synth_F0_asu_AS"/>
</dbReference>
<dbReference type="InterPro" id="IPR035908">
    <property type="entry name" value="F0_ATP_A_sf"/>
</dbReference>
<dbReference type="NCBIfam" id="TIGR01131">
    <property type="entry name" value="ATP_synt_6_or_A"/>
    <property type="match status" value="1"/>
</dbReference>
<dbReference type="PANTHER" id="PTHR42823">
    <property type="entry name" value="ATP SYNTHASE SUBUNIT A, CHLOROPLASTIC"/>
    <property type="match status" value="1"/>
</dbReference>
<dbReference type="PANTHER" id="PTHR42823:SF3">
    <property type="entry name" value="ATP SYNTHASE SUBUNIT A, CHLOROPLASTIC"/>
    <property type="match status" value="1"/>
</dbReference>
<dbReference type="Pfam" id="PF00119">
    <property type="entry name" value="ATP-synt_A"/>
    <property type="match status" value="1"/>
</dbReference>
<dbReference type="PRINTS" id="PR00123">
    <property type="entry name" value="ATPASEA"/>
</dbReference>
<dbReference type="SUPFAM" id="SSF81336">
    <property type="entry name" value="F1F0 ATP synthase subunit A"/>
    <property type="match status" value="1"/>
</dbReference>
<dbReference type="PROSITE" id="PS00449">
    <property type="entry name" value="ATPASE_A"/>
    <property type="match status" value="1"/>
</dbReference>
<geneLocation type="chloroplast"/>
<reference key="1">
    <citation type="journal article" date="1990" name="Curr. Genet.">
        <title>Expression of the wheat chloroplast gene for CF0 subunit IV of ATP synthase.</title>
        <authorList>
            <person name="Hoglund A.S."/>
            <person name="Plant A.L."/>
            <person name="Gray J.C."/>
        </authorList>
    </citation>
    <scope>NUCLEOTIDE SEQUENCE [GENOMIC DNA]</scope>
</reference>
<reference key="2">
    <citation type="journal article" date="1999" name="Genome">
        <title>Molecular analysis of a 21.1-kb fragment of wheat chloroplast DNA bearing RNA polymerase subunit (rpo) genes.</title>
        <authorList>
            <person name="Ohnishi Y."/>
            <person name="Tajiri H."/>
            <person name="Matsuoka Y."/>
            <person name="Tsunewaki K."/>
        </authorList>
    </citation>
    <scope>NUCLEOTIDE SEQUENCE [GENOMIC DNA]</scope>
    <source>
        <strain>cv. Chinese Spring</strain>
    </source>
</reference>
<reference key="3">
    <citation type="journal article" date="2000" name="Plant Mol. Biol. Rep.">
        <title>Chinese spring wheat (Triticum aestivum L.) chloroplast genome: complete sequence and contig clones.</title>
        <authorList>
            <person name="Ogihara Y."/>
            <person name="Isono K."/>
            <person name="Kojima T."/>
            <person name="Endo A."/>
            <person name="Hanaoka M."/>
            <person name="Shiina T."/>
            <person name="Terachi T."/>
            <person name="Utsugi S."/>
            <person name="Murata M."/>
            <person name="Mori N."/>
            <person name="Takumi S."/>
            <person name="Ikeo K."/>
            <person name="Gojobori T."/>
            <person name="Murai R."/>
            <person name="Murai K."/>
            <person name="Matsuoka Y."/>
            <person name="Ohnishi Y."/>
            <person name="Tajiri H."/>
            <person name="Tsunewaki K."/>
        </authorList>
    </citation>
    <scope>NUCLEOTIDE SEQUENCE [LARGE SCALE GENOMIC DNA]</scope>
    <source>
        <strain>cv. Chinese Spring</strain>
    </source>
</reference>
<keyword id="KW-0066">ATP synthesis</keyword>
<keyword id="KW-0138">CF(0)</keyword>
<keyword id="KW-0150">Chloroplast</keyword>
<keyword id="KW-0375">Hydrogen ion transport</keyword>
<keyword id="KW-0406">Ion transport</keyword>
<keyword id="KW-0472">Membrane</keyword>
<keyword id="KW-0934">Plastid</keyword>
<keyword id="KW-1185">Reference proteome</keyword>
<keyword id="KW-0793">Thylakoid</keyword>
<keyword id="KW-0812">Transmembrane</keyword>
<keyword id="KW-1133">Transmembrane helix</keyword>
<keyword id="KW-0813">Transport</keyword>
<protein>
    <recommendedName>
        <fullName evidence="1">ATP synthase subunit a, chloroplastic</fullName>
    </recommendedName>
    <alternativeName>
        <fullName evidence="1">ATP synthase F0 sector subunit a</fullName>
    </alternativeName>
    <alternativeName>
        <fullName evidence="1">F-ATPase subunit IV</fullName>
    </alternativeName>
</protein>